<accession>Q07560</accession>
<accession>D6VRK6</accession>
<accession>P82260</accession>
<dbReference type="EC" id="2.7.8.41" evidence="3 6"/>
<dbReference type="EMBL" id="Z74190">
    <property type="protein sequence ID" value="CAA98715.1"/>
    <property type="molecule type" value="Genomic_DNA"/>
</dbReference>
<dbReference type="EMBL" id="BK006938">
    <property type="protein sequence ID" value="DAA11716.1"/>
    <property type="molecule type" value="Genomic_DNA"/>
</dbReference>
<dbReference type="PIR" id="S67689">
    <property type="entry name" value="S67689"/>
</dbReference>
<dbReference type="RefSeq" id="NP_010139.1">
    <property type="nucleotide sequence ID" value="NM_001180202.1"/>
</dbReference>
<dbReference type="SMR" id="Q07560"/>
<dbReference type="BioGRID" id="31919">
    <property type="interactions" value="552"/>
</dbReference>
<dbReference type="FunCoup" id="Q07560">
    <property type="interactions" value="451"/>
</dbReference>
<dbReference type="IntAct" id="Q07560">
    <property type="interactions" value="20"/>
</dbReference>
<dbReference type="STRING" id="4932.YDL142C"/>
<dbReference type="SwissLipids" id="SLP:000000062"/>
<dbReference type="SwissLipids" id="SLP:000000221"/>
<dbReference type="iPTMnet" id="Q07560"/>
<dbReference type="PaxDb" id="4932-YDL142C"/>
<dbReference type="PeptideAtlas" id="Q07560"/>
<dbReference type="EnsemblFungi" id="YDL142C_mRNA">
    <property type="protein sequence ID" value="YDL142C"/>
    <property type="gene ID" value="YDL142C"/>
</dbReference>
<dbReference type="GeneID" id="851413"/>
<dbReference type="KEGG" id="sce:YDL142C"/>
<dbReference type="AGR" id="SGD:S000002301"/>
<dbReference type="SGD" id="S000002301">
    <property type="gene designation" value="CRD1"/>
</dbReference>
<dbReference type="VEuPathDB" id="FungiDB:YDL142C"/>
<dbReference type="eggNOG" id="KOG1617">
    <property type="taxonomic scope" value="Eukaryota"/>
</dbReference>
<dbReference type="GeneTree" id="ENSGT00390000001607"/>
<dbReference type="HOGENOM" id="CLU_051314_0_2_1"/>
<dbReference type="InParanoid" id="Q07560"/>
<dbReference type="OMA" id="RIAMSPY"/>
<dbReference type="OrthoDB" id="10020554at2759"/>
<dbReference type="BioCyc" id="YEAST:YDL142C-MONOMER"/>
<dbReference type="BRENDA" id="2.7.8.41">
    <property type="organism ID" value="984"/>
</dbReference>
<dbReference type="Reactome" id="R-SCE-1482925">
    <property type="pathway name" value="Acyl chain remodelling of PG"/>
</dbReference>
<dbReference type="Reactome" id="R-SCE-1483076">
    <property type="pathway name" value="Synthesis of CL"/>
</dbReference>
<dbReference type="SABIO-RK" id="Q07560"/>
<dbReference type="BioGRID-ORCS" id="851413">
    <property type="hits" value="0 hits in 10 CRISPR screens"/>
</dbReference>
<dbReference type="PRO" id="PR:Q07560"/>
<dbReference type="Proteomes" id="UP000002311">
    <property type="component" value="Chromosome IV"/>
</dbReference>
<dbReference type="RNAct" id="Q07560">
    <property type="molecule type" value="protein"/>
</dbReference>
<dbReference type="GO" id="GO:0005743">
    <property type="term" value="C:mitochondrial inner membrane"/>
    <property type="evidence" value="ECO:0000250"/>
    <property type="project" value="UniProtKB"/>
</dbReference>
<dbReference type="GO" id="GO:0005739">
    <property type="term" value="C:mitochondrion"/>
    <property type="evidence" value="ECO:0007005"/>
    <property type="project" value="SGD"/>
</dbReference>
<dbReference type="GO" id="GO:0043337">
    <property type="term" value="F:cardiolipin synthase (CMP-forming)"/>
    <property type="evidence" value="ECO:0000314"/>
    <property type="project" value="SGD"/>
</dbReference>
<dbReference type="GO" id="GO:0032049">
    <property type="term" value="P:cardiolipin biosynthetic process"/>
    <property type="evidence" value="ECO:0000318"/>
    <property type="project" value="GO_Central"/>
</dbReference>
<dbReference type="GO" id="GO:0006873">
    <property type="term" value="P:intracellular monoatomic ion homeostasis"/>
    <property type="evidence" value="ECO:0000315"/>
    <property type="project" value="SGD"/>
</dbReference>
<dbReference type="GO" id="GO:0008610">
    <property type="term" value="P:lipid biosynthetic process"/>
    <property type="evidence" value="ECO:0000314"/>
    <property type="project" value="SGD"/>
</dbReference>
<dbReference type="GO" id="GO:0000002">
    <property type="term" value="P:mitochondrial genome maintenance"/>
    <property type="evidence" value="ECO:0000315"/>
    <property type="project" value="SGD"/>
</dbReference>
<dbReference type="GO" id="GO:0007006">
    <property type="term" value="P:mitochondrial membrane organization"/>
    <property type="evidence" value="ECO:0000315"/>
    <property type="project" value="SGD"/>
</dbReference>
<dbReference type="GO" id="GO:0006644">
    <property type="term" value="P:phospholipid metabolic process"/>
    <property type="evidence" value="ECO:0000315"/>
    <property type="project" value="SGD"/>
</dbReference>
<dbReference type="GO" id="GO:0006612">
    <property type="term" value="P:protein targeting to membrane"/>
    <property type="evidence" value="ECO:0000315"/>
    <property type="project" value="SGD"/>
</dbReference>
<dbReference type="FunFam" id="1.20.120.1760:FF:000017">
    <property type="entry name" value="Phosphatidyl synthase"/>
    <property type="match status" value="1"/>
</dbReference>
<dbReference type="Gene3D" id="1.20.120.1760">
    <property type="match status" value="1"/>
</dbReference>
<dbReference type="InterPro" id="IPR050324">
    <property type="entry name" value="CDP-alcohol_PTase-I"/>
</dbReference>
<dbReference type="InterPro" id="IPR000462">
    <property type="entry name" value="CDP-OH_P_trans"/>
</dbReference>
<dbReference type="InterPro" id="IPR043130">
    <property type="entry name" value="CDP-OH_PTrfase_TM_dom"/>
</dbReference>
<dbReference type="InterPro" id="IPR048254">
    <property type="entry name" value="CDP_ALCOHOL_P_TRANSF_CS"/>
</dbReference>
<dbReference type="PANTHER" id="PTHR14269:SF60">
    <property type="entry name" value="CARDIOLIPIN SYNTHASE (CMP-FORMING)"/>
    <property type="match status" value="1"/>
</dbReference>
<dbReference type="PANTHER" id="PTHR14269">
    <property type="entry name" value="CDP-DIACYLGLYCEROL--GLYCEROL-3-PHOSPHATE 3-PHOSPHATIDYLTRANSFERASE-RELATED"/>
    <property type="match status" value="1"/>
</dbReference>
<dbReference type="Pfam" id="PF01066">
    <property type="entry name" value="CDP-OH_P_transf"/>
    <property type="match status" value="1"/>
</dbReference>
<dbReference type="PROSITE" id="PS00379">
    <property type="entry name" value="CDP_ALCOHOL_P_TRANSF"/>
    <property type="match status" value="1"/>
</dbReference>
<gene>
    <name type="primary">CRD1</name>
    <name type="synonym">CLS1</name>
    <name type="ordered locus">YDL142C</name>
</gene>
<name>CRLS1_YEAST</name>
<feature type="chain" id="PRO_0000056810" description="Cardiolipin synthase (CMP-forming)">
    <location>
        <begin position="1"/>
        <end position="283"/>
    </location>
</feature>
<feature type="transmembrane region" description="Helical" evidence="1">
    <location>
        <begin position="83"/>
        <end position="103"/>
    </location>
</feature>
<feature type="transmembrane region" description="Helical" evidence="1">
    <location>
        <begin position="155"/>
        <end position="175"/>
    </location>
</feature>
<feature type="transmembrane region" description="Helical" evidence="1">
    <location>
        <begin position="209"/>
        <end position="229"/>
    </location>
</feature>
<reference key="1">
    <citation type="journal article" date="1997" name="Nature">
        <title>The nucleotide sequence of Saccharomyces cerevisiae chromosome IV.</title>
        <authorList>
            <person name="Jacq C."/>
            <person name="Alt-Moerbe J."/>
            <person name="Andre B."/>
            <person name="Arnold W."/>
            <person name="Bahr A."/>
            <person name="Ballesta J.P.G."/>
            <person name="Bargues M."/>
            <person name="Baron L."/>
            <person name="Becker A."/>
            <person name="Biteau N."/>
            <person name="Bloecker H."/>
            <person name="Blugeon C."/>
            <person name="Boskovic J."/>
            <person name="Brandt P."/>
            <person name="Brueckner M."/>
            <person name="Buitrago M.J."/>
            <person name="Coster F."/>
            <person name="Delaveau T."/>
            <person name="del Rey F."/>
            <person name="Dujon B."/>
            <person name="Eide L.G."/>
            <person name="Garcia-Cantalejo J.M."/>
            <person name="Goffeau A."/>
            <person name="Gomez-Peris A."/>
            <person name="Granotier C."/>
            <person name="Hanemann V."/>
            <person name="Hankeln T."/>
            <person name="Hoheisel J.D."/>
            <person name="Jaeger W."/>
            <person name="Jimenez A."/>
            <person name="Jonniaux J.-L."/>
            <person name="Kraemer C."/>
            <person name="Kuester H."/>
            <person name="Laamanen P."/>
            <person name="Legros Y."/>
            <person name="Louis E.J."/>
            <person name="Moeller-Rieker S."/>
            <person name="Monnet A."/>
            <person name="Moro M."/>
            <person name="Mueller-Auer S."/>
            <person name="Nussbaumer B."/>
            <person name="Paricio N."/>
            <person name="Paulin L."/>
            <person name="Perea J."/>
            <person name="Perez-Alonso M."/>
            <person name="Perez-Ortin J.E."/>
            <person name="Pohl T.M."/>
            <person name="Prydz H."/>
            <person name="Purnelle B."/>
            <person name="Rasmussen S.W."/>
            <person name="Remacha M.A."/>
            <person name="Revuelta J.L."/>
            <person name="Rieger M."/>
            <person name="Salom D."/>
            <person name="Saluz H.P."/>
            <person name="Saiz J.E."/>
            <person name="Saren A.-M."/>
            <person name="Schaefer M."/>
            <person name="Scharfe M."/>
            <person name="Schmidt E.R."/>
            <person name="Schneider C."/>
            <person name="Scholler P."/>
            <person name="Schwarz S."/>
            <person name="Soler-Mira A."/>
            <person name="Urrestarazu L.A."/>
            <person name="Verhasselt P."/>
            <person name="Vissers S."/>
            <person name="Voet M."/>
            <person name="Volckaert G."/>
            <person name="Wagner G."/>
            <person name="Wambutt R."/>
            <person name="Wedler E."/>
            <person name="Wedler H."/>
            <person name="Woelfl S."/>
            <person name="Harris D.E."/>
            <person name="Bowman S."/>
            <person name="Brown D."/>
            <person name="Churcher C.M."/>
            <person name="Connor R."/>
            <person name="Dedman K."/>
            <person name="Gentles S."/>
            <person name="Hamlin N."/>
            <person name="Hunt S."/>
            <person name="Jones L."/>
            <person name="McDonald S."/>
            <person name="Murphy L.D."/>
            <person name="Niblett D."/>
            <person name="Odell C."/>
            <person name="Oliver K."/>
            <person name="Rajandream M.A."/>
            <person name="Richards C."/>
            <person name="Shore L."/>
            <person name="Walsh S.V."/>
            <person name="Barrell B.G."/>
            <person name="Dietrich F.S."/>
            <person name="Mulligan J.T."/>
            <person name="Allen E."/>
            <person name="Araujo R."/>
            <person name="Aviles E."/>
            <person name="Berno A."/>
            <person name="Carpenter J."/>
            <person name="Chen E."/>
            <person name="Cherry J.M."/>
            <person name="Chung E."/>
            <person name="Duncan M."/>
            <person name="Hunicke-Smith S."/>
            <person name="Hyman R.W."/>
            <person name="Komp C."/>
            <person name="Lashkari D."/>
            <person name="Lew H."/>
            <person name="Lin D."/>
            <person name="Mosedale D."/>
            <person name="Nakahara K."/>
            <person name="Namath A."/>
            <person name="Oefner P."/>
            <person name="Oh C."/>
            <person name="Petel F.X."/>
            <person name="Roberts D."/>
            <person name="Schramm S."/>
            <person name="Schroeder M."/>
            <person name="Shogren T."/>
            <person name="Shroff N."/>
            <person name="Winant A."/>
            <person name="Yelton M.A."/>
            <person name="Botstein D."/>
            <person name="Davis R.W."/>
            <person name="Johnston M."/>
            <person name="Andrews S."/>
            <person name="Brinkman R."/>
            <person name="Cooper J."/>
            <person name="Ding H."/>
            <person name="Du Z."/>
            <person name="Favello A."/>
            <person name="Fulton L."/>
            <person name="Gattung S."/>
            <person name="Greco T."/>
            <person name="Hallsworth K."/>
            <person name="Hawkins J."/>
            <person name="Hillier L.W."/>
            <person name="Jier M."/>
            <person name="Johnson D."/>
            <person name="Johnston L."/>
            <person name="Kirsten J."/>
            <person name="Kucaba T."/>
            <person name="Langston Y."/>
            <person name="Latreille P."/>
            <person name="Le T."/>
            <person name="Mardis E."/>
            <person name="Menezes S."/>
            <person name="Miller N."/>
            <person name="Nhan M."/>
            <person name="Pauley A."/>
            <person name="Peluso D."/>
            <person name="Rifkin L."/>
            <person name="Riles L."/>
            <person name="Taich A."/>
            <person name="Trevaskis E."/>
            <person name="Vignati D."/>
            <person name="Wilcox L."/>
            <person name="Wohldman P."/>
            <person name="Vaudin M."/>
            <person name="Wilson R."/>
            <person name="Waterston R."/>
            <person name="Albermann K."/>
            <person name="Hani J."/>
            <person name="Heumann K."/>
            <person name="Kleine K."/>
            <person name="Mewes H.-W."/>
            <person name="Zollner A."/>
            <person name="Zaccaria P."/>
        </authorList>
    </citation>
    <scope>NUCLEOTIDE SEQUENCE [LARGE SCALE GENOMIC DNA]</scope>
    <source>
        <strain>ATCC 204508 / S288c</strain>
    </source>
</reference>
<reference key="2">
    <citation type="journal article" date="2014" name="G3 (Bethesda)">
        <title>The reference genome sequence of Saccharomyces cerevisiae: Then and now.</title>
        <authorList>
            <person name="Engel S.R."/>
            <person name="Dietrich F.S."/>
            <person name="Fisk D.G."/>
            <person name="Binkley G."/>
            <person name="Balakrishnan R."/>
            <person name="Costanzo M.C."/>
            <person name="Dwight S.S."/>
            <person name="Hitz B.C."/>
            <person name="Karra K."/>
            <person name="Nash R.S."/>
            <person name="Weng S."/>
            <person name="Wong E.D."/>
            <person name="Lloyd P."/>
            <person name="Skrzypek M.S."/>
            <person name="Miyasato S.R."/>
            <person name="Simison M."/>
            <person name="Cherry J.M."/>
        </authorList>
    </citation>
    <scope>GENOME REANNOTATION</scope>
    <source>
        <strain>ATCC 204508 / S288c</strain>
    </source>
</reference>
<reference key="3">
    <citation type="submission" date="1999-12" db="UniProtKB">
        <authorList>
            <person name="Sarma P.V.G.K."/>
            <person name="Sarma P.U."/>
        </authorList>
    </citation>
    <scope>NUCLEOTIDE SEQUENCE [GENOMIC DNA] OF 106-135</scope>
</reference>
<reference key="4">
    <citation type="journal article" date="1990" name="Biochim. Biophys. Acta">
        <title>Biochemical characterization and regulation of cardiolipin synthase in Saccharomyces cerevisiae.</title>
        <authorList>
            <person name="Tamai K.T."/>
            <person name="Greenberg M.L."/>
        </authorList>
    </citation>
    <scope>FUNCTION</scope>
    <scope>CATALYTIC ACTIVITY</scope>
    <scope>COFACTOR</scope>
    <scope>BIOPHYSICOCHEMICAL PROPERTIES</scope>
</reference>
<reference key="5">
    <citation type="journal article" date="1997" name="Biochim. Biophys. Acta">
        <title>Cardiolipin synthase from yeast.</title>
        <authorList>
            <person name="Schlame M."/>
            <person name="Greenberg M.L."/>
        </authorList>
    </citation>
    <scope>FUNCTION</scope>
    <scope>CATALYTIC ACTIVITY</scope>
</reference>
<reference key="6">
    <citation type="journal article" date="1998" name="FEBS Lett.">
        <title>YDL142c encodes cardiolipin synthase (Cls1p) and is non-essential for aerobic growth of Saccharomyces cerevisiae.</title>
        <authorList>
            <person name="Tuller G."/>
            <person name="Hrastnik C."/>
            <person name="Achleitner G."/>
            <person name="Schiefthaler U."/>
            <person name="Klein F."/>
            <person name="Daum G."/>
        </authorList>
    </citation>
    <scope>IDENTIFICATION</scope>
</reference>
<reference key="7">
    <citation type="journal article" date="1998" name="J. Biol. Chem.">
        <title>Isolation and characterization of the gene (CLS1) encoding cardiolipin synthase in Saccharomyces cerevisiae.</title>
        <authorList>
            <person name="Chang S.C."/>
            <person name="Heacock P.N."/>
            <person name="Mileykovskaya E."/>
            <person name="Voelker D.R."/>
            <person name="Dowhan W."/>
        </authorList>
    </citation>
    <scope>IDENTIFICATION</scope>
</reference>
<reference key="8">
    <citation type="journal article" date="1998" name="J. Biol. Chem.">
        <title>Cardiolipin synthase is associated with a large complex in yeast mitochondria.</title>
        <authorList>
            <person name="Zhao M."/>
            <person name="Schlame M."/>
            <person name="Rua D."/>
            <person name="Greenberg M.L."/>
        </authorList>
    </citation>
    <scope>SUBUNIT</scope>
    <scope>SUBCELLULAR LOCATION</scope>
</reference>
<reference key="9">
    <citation type="journal article" date="2003" name="Nature">
        <title>Global analysis of protein expression in yeast.</title>
        <authorList>
            <person name="Ghaemmaghami S."/>
            <person name="Huh W.-K."/>
            <person name="Bower K."/>
            <person name="Howson R.W."/>
            <person name="Belle A."/>
            <person name="Dephoure N."/>
            <person name="O'Shea E.K."/>
            <person name="Weissman J.S."/>
        </authorList>
    </citation>
    <scope>LEVEL OF PROTEIN EXPRESSION [LARGE SCALE ANALYSIS]</scope>
</reference>
<reference key="10">
    <citation type="journal article" date="2015" name="Front. Microbiol.">
        <title>Functional Specificity of Cardiolipin Synthase Revealed by the Identification of a Cardiolipin Synthase CrCLS1 in Chlamydomonas reinhardtii.</title>
        <authorList>
            <person name="Hung C.H."/>
            <person name="Kobayashi K."/>
            <person name="Wada H."/>
            <person name="Nakamura Y."/>
        </authorList>
    </citation>
    <scope>FUNCTION</scope>
    <scope>DISRUPTION PHENOTYPE</scope>
</reference>
<reference key="11">
    <citation type="journal article" date="2017" name="Microb. Cell">
        <title>Cross-species complementation of bacterial- and eukaryotic-type cardiolipin synthases.</title>
        <authorList>
            <person name="Gottier P."/>
            <person name="Serricchio M."/>
            <person name="Vitale R."/>
            <person name="Corcelli A."/>
            <person name="Buetikofer P."/>
        </authorList>
    </citation>
    <scope>FUNCTION</scope>
    <scope>DISRUPTION PHENOTYPE</scope>
</reference>
<sequence length="283" mass="32020">MIQMVPIYSCSALLRRTIPKRPFYHVLSGLTVRFKVNPQLNYNLFRDLTRREYATNPSKTPHIKSKLLNIPNILTLSRIGCTPFIGLFIITNNLTPALGLFAFSSITDFMDGYIARKYGLKTIAGTILDPLADKLLMITTTLALSVPSGPQIIPVSIAAIILGRDVLLAISALFIRYSTLKLKYPGRVAWNSYWDIVRYPSAEVRPSQLSKWNTFFQMVYLGSGVLLLLYEKEEGCEKTEEDFEDRKQDFQKAFSYLGYVTATTTIMSGVSYALKRNAFKLLK</sequence>
<comment type="function">
    <text evidence="3 4 5 6">Catalyzes the synthesis of cardiolipin (CL) (diphosphatidylglycerol) by specifically transferring a phosphatidyl group from CDP-diacylglycerol to phosphatidylglycerol (PG) (PubMed:2171667, PubMed:26793177, PubMed:29167800, PubMed:9370334). CL is a key phospholipid in mitochondrial membranes and plays important roles in maintaining the functional integrity and dynamics of mitochondria under both optimal and stress conditions (PubMed:9370334).</text>
</comment>
<comment type="catalytic activity">
    <reaction evidence="3 6">
        <text>a CDP-1,2-diacyl-sn-glycerol + a 1,2-diacyl-sn-glycero-3-phospho-(1'-sn-glycerol) = a cardiolipin + CMP + H(+)</text>
        <dbReference type="Rhea" id="RHEA:32931"/>
        <dbReference type="ChEBI" id="CHEBI:15378"/>
        <dbReference type="ChEBI" id="CHEBI:58332"/>
        <dbReference type="ChEBI" id="CHEBI:60377"/>
        <dbReference type="ChEBI" id="CHEBI:62237"/>
        <dbReference type="ChEBI" id="CHEBI:64716"/>
        <dbReference type="EC" id="2.7.8.41"/>
    </reaction>
</comment>
<comment type="cofactor">
    <cofactor evidence="3">
        <name>Mg(2+)</name>
        <dbReference type="ChEBI" id="CHEBI:18420"/>
    </cofactor>
</comment>
<comment type="biophysicochemical properties">
    <kinetics>
        <KM evidence="3">1 mM for phosphatidylglycerol</KM>
        <KM evidence="3">36 uM for CDP-diacylglycerol</KM>
    </kinetics>
    <phDependence>
        <text evidence="3">Optimum pH is 9.</text>
    </phDependence>
    <temperatureDependence>
        <text evidence="3">Optimum temperature is 45 degrees Celsius.</text>
    </temperatureDependence>
</comment>
<comment type="subunit">
    <text evidence="7">May be found in a large complex.</text>
</comment>
<comment type="subcellular location">
    <subcellularLocation>
        <location evidence="9">Mitochondrion inner membrane</location>
        <topology evidence="1">Multi-pass membrane protein</topology>
    </subcellularLocation>
</comment>
<comment type="disruption phenotype">
    <text evidence="4 5">Cardiolipin absent from cells (PubMed:26793177). Decreases cell population growth during growth on the non-fermentable carbon source ethanol (PubMed:26793177). Sensitive to thermal stress (PubMed:26793177, PubMed:29167800).</text>
</comment>
<comment type="miscellaneous">
    <text evidence="2">Present with 876 molecules/cell in log phase SD medium.</text>
</comment>
<comment type="miscellaneous">
    <text evidence="5">Partially functionally complemented by T.brucei CLS/cardiolipin synthetase, but conversely does not functionally complement T.brucei CLS/cardiolipin synthetase.</text>
</comment>
<comment type="similarity">
    <text evidence="8">Belongs to the CDP-alcohol phosphatidyltransferase class-I family.</text>
</comment>
<comment type="caution">
    <text evidence="8">Ref.3 sequence was originally thought to originate from Mycobacterium phlei.</text>
</comment>
<protein>
    <recommendedName>
        <fullName>Cardiolipin synthase (CMP-forming)</fullName>
        <shortName>CLS</shortName>
        <ecNumber evidence="3 6">2.7.8.41</ecNumber>
    </recommendedName>
</protein>
<organism>
    <name type="scientific">Saccharomyces cerevisiae (strain ATCC 204508 / S288c)</name>
    <name type="common">Baker's yeast</name>
    <dbReference type="NCBI Taxonomy" id="559292"/>
    <lineage>
        <taxon>Eukaryota</taxon>
        <taxon>Fungi</taxon>
        <taxon>Dikarya</taxon>
        <taxon>Ascomycota</taxon>
        <taxon>Saccharomycotina</taxon>
        <taxon>Saccharomycetes</taxon>
        <taxon>Saccharomycetales</taxon>
        <taxon>Saccharomycetaceae</taxon>
        <taxon>Saccharomyces</taxon>
    </lineage>
</organism>
<keyword id="KW-0444">Lipid biosynthesis</keyword>
<keyword id="KW-0443">Lipid metabolism</keyword>
<keyword id="KW-0472">Membrane</keyword>
<keyword id="KW-0496">Mitochondrion</keyword>
<keyword id="KW-0999">Mitochondrion inner membrane</keyword>
<keyword id="KW-0594">Phospholipid biosynthesis</keyword>
<keyword id="KW-1208">Phospholipid metabolism</keyword>
<keyword id="KW-1185">Reference proteome</keyword>
<keyword id="KW-0808">Transferase</keyword>
<keyword id="KW-0812">Transmembrane</keyword>
<keyword id="KW-1133">Transmembrane helix</keyword>
<evidence type="ECO:0000255" key="1"/>
<evidence type="ECO:0000269" key="2">
    <source>
    </source>
</evidence>
<evidence type="ECO:0000269" key="3">
    <source>
    </source>
</evidence>
<evidence type="ECO:0000269" key="4">
    <source>
    </source>
</evidence>
<evidence type="ECO:0000269" key="5">
    <source>
    </source>
</evidence>
<evidence type="ECO:0000269" key="6">
    <source>
    </source>
</evidence>
<evidence type="ECO:0000269" key="7">
    <source>
    </source>
</evidence>
<evidence type="ECO:0000305" key="8"/>
<evidence type="ECO:0000305" key="9">
    <source>
    </source>
</evidence>
<proteinExistence type="evidence at protein level"/>